<comment type="function">
    <text evidence="4 5 8 10 14 15 17 22">Aspartic protease (PubMed:21266539). Appears to act as negative regulator of constitutive exocytosis (PubMed:10330187, PubMed:12051757). May act at the level of secretory vesicle docking and fusion as a competitive inhibitor of SNARE assembly (PubMed:12925750). Acts as a linker between the 19S proteasome and polyubiquitinated proteins like the HO endonuclease and UFO1 via UBA domain interactions with ubiquitin for their subsequent degradation (PubMed:16478980, PubMed:17144915). Required for S-phase checkpoint control (PubMed:11238935, PubMed:17144915).</text>
</comment>
<comment type="activity regulation">
    <text evidence="18">Inhibited by the proteinase inhibitors indinavir, lopinavir, nelfinavir, isovaleryl pepstatin, ritonavir, saquinavir and tipranavir.</text>
</comment>
<comment type="subunit">
    <text evidence="4 6 10 14 15 16 17">Forms homodimers. Interacts with RAD23. These interactions are mediated by the UBA domain. Is also able to bind ubiquitin and polyubiquitinated proteins. Interacts with the SNAREs SNC1, SNC2, SSO1, TLG1 and TLG2. Binding to SSO1 is promoted by the phosphorylation of 'Ser-49' of SSO1 by TKP1.</text>
</comment>
<comment type="interaction">
    <interactant intactId="EBI-5717">
        <id>P40087</id>
    </interactant>
    <interactant intactId="EBI-7000452">
        <id>P0CG63</id>
        <label>UBI4</label>
    </interactant>
    <organismsDiffer>false</organismsDiffer>
    <experiments>3</experiments>
</comment>
<comment type="interaction">
    <interactant intactId="EBI-5717">
        <id>P40087</id>
    </interactant>
    <interactant intactId="EBI-3390054">
        <id>P0CG48</id>
        <label>UBC</label>
    </interactant>
    <organismsDiffer>true</organismsDiffer>
    <experiments>2</experiments>
</comment>
<comment type="subcellular location">
    <subcellularLocation>
        <location evidence="4">Cytoplasm</location>
    </subcellularLocation>
    <subcellularLocation>
        <location evidence="4">Cell membrane</location>
        <topology evidence="4">Peripheral membrane protein</topology>
        <orientation evidence="4">Cytoplasmic side</orientation>
    </subcellularLocation>
</comment>
<comment type="induction">
    <text evidence="7 13 19 20">By DNA damage via PDR3.</text>
</comment>
<comment type="miscellaneous">
    <text evidence="12">Present with 6510 molecules/cell in log phase SD medium.</text>
</comment>
<comment type="similarity">
    <text evidence="21">Belongs to the DDI1 family.</text>
</comment>
<protein>
    <recommendedName>
        <fullName>DNA damage-inducible protein 1</fullName>
        <ecNumber evidence="1">3.4.23.-</ecNumber>
    </recommendedName>
    <alternativeName>
        <fullName>v-SNARE-master 1</fullName>
    </alternativeName>
</protein>
<proteinExistence type="evidence at protein level"/>
<feature type="chain" id="PRO_0000210997" description="DNA damage-inducible protein 1">
    <location>
        <begin position="1"/>
        <end position="428"/>
    </location>
</feature>
<feature type="domain" description="Ubiquitin-like">
    <location>
        <begin position="1"/>
        <end position="80"/>
    </location>
</feature>
<feature type="domain" description="UBA" evidence="2">
    <location>
        <begin position="389"/>
        <end position="428"/>
    </location>
</feature>
<feature type="region of interest" description="Disordered" evidence="3">
    <location>
        <begin position="328"/>
        <end position="388"/>
    </location>
</feature>
<feature type="compositionally biased region" description="Low complexity" evidence="3">
    <location>
        <begin position="338"/>
        <end position="354"/>
    </location>
</feature>
<feature type="compositionally biased region" description="Low complexity" evidence="3">
    <location>
        <begin position="371"/>
        <end position="388"/>
    </location>
</feature>
<feature type="active site" evidence="21">
    <location>
        <position position="220"/>
    </location>
</feature>
<feature type="cross-link" description="Glycyl lysine isopeptide (Lys-Gly) (interchain with G-Cter in ubiquitin)" evidence="9">
    <location>
        <position position="171"/>
    </location>
</feature>
<feature type="cross-link" description="Glycyl lysine isopeptide (Lys-Gly) (interchain with G-Cter in ubiquitin)" evidence="11">
    <location>
        <position position="257"/>
    </location>
</feature>
<feature type="mutagenesis site" description="Increased protein secretion most likely due to reduced catalytic activity. Cells are larger and clump together." evidence="18">
    <original>D</original>
    <variation>A</variation>
    <location>
        <position position="220"/>
    </location>
</feature>
<feature type="strand" evidence="24">
    <location>
        <begin position="3"/>
        <end position="6"/>
    </location>
</feature>
<feature type="turn" evidence="24">
    <location>
        <begin position="8"/>
        <end position="10"/>
    </location>
</feature>
<feature type="strand" evidence="24">
    <location>
        <begin position="13"/>
        <end position="17"/>
    </location>
</feature>
<feature type="helix" evidence="24">
    <location>
        <begin position="25"/>
        <end position="34"/>
    </location>
</feature>
<feature type="helix" evidence="24">
    <location>
        <begin position="40"/>
        <end position="42"/>
    </location>
</feature>
<feature type="strand" evidence="24">
    <location>
        <begin position="44"/>
        <end position="47"/>
    </location>
</feature>
<feature type="strand" evidence="25">
    <location>
        <begin position="50"/>
        <end position="52"/>
    </location>
</feature>
<feature type="helix" evidence="24">
    <location>
        <begin position="60"/>
        <end position="63"/>
    </location>
</feature>
<feature type="strand" evidence="24">
    <location>
        <begin position="70"/>
        <end position="74"/>
    </location>
</feature>
<feature type="turn" evidence="24">
    <location>
        <begin position="76"/>
        <end position="79"/>
    </location>
</feature>
<feature type="helix" evidence="27">
    <location>
        <begin position="90"/>
        <end position="103"/>
    </location>
</feature>
<feature type="helix" evidence="27">
    <location>
        <begin position="105"/>
        <end position="114"/>
    </location>
</feature>
<feature type="helix" evidence="27">
    <location>
        <begin position="118"/>
        <end position="123"/>
    </location>
</feature>
<feature type="helix" evidence="27">
    <location>
        <begin position="125"/>
        <end position="130"/>
    </location>
</feature>
<feature type="helix" evidence="27">
    <location>
        <begin position="133"/>
        <end position="140"/>
    </location>
</feature>
<feature type="helix" evidence="27">
    <location>
        <begin position="155"/>
        <end position="163"/>
    </location>
</feature>
<feature type="helix" evidence="27">
    <location>
        <begin position="168"/>
        <end position="189"/>
    </location>
</feature>
<feature type="strand" evidence="26">
    <location>
        <begin position="205"/>
        <end position="210"/>
    </location>
</feature>
<feature type="strand" evidence="26">
    <location>
        <begin position="213"/>
        <end position="219"/>
    </location>
</feature>
<feature type="strand" evidence="26">
    <location>
        <begin position="227"/>
        <end position="229"/>
    </location>
</feature>
<feature type="helix" evidence="26">
    <location>
        <begin position="230"/>
        <end position="235"/>
    </location>
</feature>
<feature type="helix" evidence="26">
    <location>
        <begin position="239"/>
        <end position="241"/>
    </location>
</feature>
<feature type="strand" evidence="26">
    <location>
        <begin position="260"/>
        <end position="269"/>
    </location>
</feature>
<feature type="strand" evidence="26">
    <location>
        <begin position="272"/>
        <end position="281"/>
    </location>
</feature>
<feature type="strand" evidence="26">
    <location>
        <begin position="286"/>
        <end position="289"/>
    </location>
</feature>
<feature type="helix" evidence="26">
    <location>
        <begin position="291"/>
        <end position="296"/>
    </location>
</feature>
<feature type="strand" evidence="26">
    <location>
        <begin position="300"/>
        <end position="302"/>
    </location>
</feature>
<feature type="turn" evidence="26">
    <location>
        <begin position="303"/>
        <end position="306"/>
    </location>
</feature>
<feature type="strand" evidence="26">
    <location>
        <begin position="307"/>
        <end position="310"/>
    </location>
</feature>
<feature type="strand" evidence="26">
    <location>
        <begin position="313"/>
        <end position="316"/>
    </location>
</feature>
<feature type="helix" evidence="26">
    <location>
        <begin position="320"/>
        <end position="322"/>
    </location>
</feature>
<feature type="helix" evidence="23">
    <location>
        <begin position="392"/>
        <end position="399"/>
    </location>
</feature>
<feature type="turn" evidence="23">
    <location>
        <begin position="400"/>
        <end position="402"/>
    </location>
</feature>
<feature type="helix" evidence="23">
    <location>
        <begin position="405"/>
        <end position="415"/>
    </location>
</feature>
<feature type="helix" evidence="23">
    <location>
        <begin position="419"/>
        <end position="426"/>
    </location>
</feature>
<sequence length="428" mass="47354">MDLTISNELTGEIYGPIEVSEDMALTDLIALLQADCGFDKTKHDLYYNMDILDSNRTQSLKELGLKTDDLLLIRGKISNSIQTDAATLSDEAFIEQFRQELLNNQMLRSQLILQIPGLNDLVNDPLLFRERLGPLILQRRYGGYNTAMNPFGIPQDEYTRLMANPDDPDNKKRIAELLDQQAIDEQLRNAIEYTPEMFTQVPMLYINIEINNYPVKAFVDTGAQTTIMSTRLAKKTGLSRMIDKRFIGEARGVGTGKIIGRIHQAQVKIETQYIPCSFTVLDTDIDVLIGLDMLKRHLACVDLKENVLRIAEVETSFLSEAEIPKSFQEGLPAPTSVTTSSDKPLTPTKTSSTLPPQPGAVPALAPRTGMGPTPTGRSTAGATTATGRTFPEQTIKQLMDLGFPRDAVVKALKQTNGNAEFAASLLFQ</sequence>
<name>DDI1_YEAST</name>
<organism>
    <name type="scientific">Saccharomyces cerevisiae (strain ATCC 204508 / S288c)</name>
    <name type="common">Baker's yeast</name>
    <dbReference type="NCBI Taxonomy" id="559292"/>
    <lineage>
        <taxon>Eukaryota</taxon>
        <taxon>Fungi</taxon>
        <taxon>Dikarya</taxon>
        <taxon>Ascomycota</taxon>
        <taxon>Saccharomycotina</taxon>
        <taxon>Saccharomycetes</taxon>
        <taxon>Saccharomycetales</taxon>
        <taxon>Saccharomycetaceae</taxon>
        <taxon>Saccharomyces</taxon>
    </lineage>
</organism>
<accession>P40087</accession>
<accession>D3DM50</accession>
<reference key="1">
    <citation type="journal article" date="1997" name="Mol. Microbiol.">
        <title>Bidirectional regulation of two DNA-damage-inducible genes, MAG1 and DDI1, from Saccharomyces cerevisiae.</title>
        <authorList>
            <person name="Liu Y."/>
            <person name="Xiao W."/>
        </authorList>
    </citation>
    <scope>NUCLEOTIDE SEQUENCE [GENOMIC DNA]</scope>
    <scope>INDUCTION</scope>
    <source>
        <strain>ATCC 64665 / S288c / DC5</strain>
    </source>
</reference>
<reference key="2">
    <citation type="journal article" date="1999" name="Mol. Cell. Biol.">
        <title>Yeast VSM1 encodes a v-SNARE binding protein that may act as a negative regulator of constitutive exocytosis.</title>
        <authorList>
            <person name="Lustgarten V."/>
            <person name="Gerst J.E."/>
        </authorList>
    </citation>
    <scope>NUCLEOTIDE SEQUENCE [GENOMIC DNA]</scope>
    <scope>FUNCTION</scope>
    <scope>INTERACTION WITH SNC1 AND SNC2</scope>
    <scope>SUBCELLULAR LOCATION</scope>
</reference>
<reference key="3">
    <citation type="journal article" date="1997" name="Nature">
        <title>The nucleotide sequence of Saccharomyces cerevisiae chromosome V.</title>
        <authorList>
            <person name="Dietrich F.S."/>
            <person name="Mulligan J.T."/>
            <person name="Hennessy K.M."/>
            <person name="Yelton M.A."/>
            <person name="Allen E."/>
            <person name="Araujo R."/>
            <person name="Aviles E."/>
            <person name="Berno A."/>
            <person name="Brennan T."/>
            <person name="Carpenter J."/>
            <person name="Chen E."/>
            <person name="Cherry J.M."/>
            <person name="Chung E."/>
            <person name="Duncan M."/>
            <person name="Guzman E."/>
            <person name="Hartzell G."/>
            <person name="Hunicke-Smith S."/>
            <person name="Hyman R.W."/>
            <person name="Kayser A."/>
            <person name="Komp C."/>
            <person name="Lashkari D."/>
            <person name="Lew H."/>
            <person name="Lin D."/>
            <person name="Mosedale D."/>
            <person name="Nakahara K."/>
            <person name="Namath A."/>
            <person name="Norgren R."/>
            <person name="Oefner P."/>
            <person name="Oh C."/>
            <person name="Petel F.X."/>
            <person name="Roberts D."/>
            <person name="Sehl P."/>
            <person name="Schramm S."/>
            <person name="Shogren T."/>
            <person name="Smith V."/>
            <person name="Taylor P."/>
            <person name="Wei Y."/>
            <person name="Botstein D."/>
            <person name="Davis R.W."/>
        </authorList>
    </citation>
    <scope>NUCLEOTIDE SEQUENCE [LARGE SCALE GENOMIC DNA]</scope>
    <source>
        <strain>ATCC 204508 / S288c</strain>
    </source>
</reference>
<reference key="4">
    <citation type="journal article" date="2014" name="G3 (Bethesda)">
        <title>The reference genome sequence of Saccharomyces cerevisiae: Then and now.</title>
        <authorList>
            <person name="Engel S.R."/>
            <person name="Dietrich F.S."/>
            <person name="Fisk D.G."/>
            <person name="Binkley G."/>
            <person name="Balakrishnan R."/>
            <person name="Costanzo M.C."/>
            <person name="Dwight S.S."/>
            <person name="Hitz B.C."/>
            <person name="Karra K."/>
            <person name="Nash R.S."/>
            <person name="Weng S."/>
            <person name="Wong E.D."/>
            <person name="Lloyd P."/>
            <person name="Skrzypek M.S."/>
            <person name="Miyasato S.R."/>
            <person name="Simison M."/>
            <person name="Cherry J.M."/>
        </authorList>
    </citation>
    <scope>GENOME REANNOTATION</scope>
    <source>
        <strain>ATCC 204508 / S288c</strain>
    </source>
</reference>
<reference key="5">
    <citation type="journal article" date="2007" name="Genome Res.">
        <title>Approaching a complete repository of sequence-verified protein-encoding clones for Saccharomyces cerevisiae.</title>
        <authorList>
            <person name="Hu Y."/>
            <person name="Rolfs A."/>
            <person name="Bhullar B."/>
            <person name="Murthy T.V.S."/>
            <person name="Zhu C."/>
            <person name="Berger M.F."/>
            <person name="Camargo A.A."/>
            <person name="Kelley F."/>
            <person name="McCarron S."/>
            <person name="Jepson D."/>
            <person name="Richardson A."/>
            <person name="Raphael J."/>
            <person name="Moreira D."/>
            <person name="Taycher E."/>
            <person name="Zuo D."/>
            <person name="Mohr S."/>
            <person name="Kane M.F."/>
            <person name="Williamson J."/>
            <person name="Simpson A.J.G."/>
            <person name="Bulyk M.L."/>
            <person name="Harlow E."/>
            <person name="Marsischky G."/>
            <person name="Kolodner R.D."/>
            <person name="LaBaer J."/>
        </authorList>
    </citation>
    <scope>NUCLEOTIDE SEQUENCE [GENOMIC DNA]</scope>
    <source>
        <strain>ATCC 204508 / S288c</strain>
    </source>
</reference>
<reference key="6">
    <citation type="journal article" date="1998" name="Nucleic Acids Res.">
        <title>Differential regulation of two closely clustered yeast genes, MAG1 and DDI1, by cell-cycle checkpoints.</title>
        <authorList>
            <person name="Zhu Y."/>
            <person name="Xiao W."/>
        </authorList>
    </citation>
    <scope>INDUCTION</scope>
</reference>
<reference key="7">
    <citation type="journal article" date="2001" name="J. Mol. Biol.">
        <title>UBA domains mediate protein-protein interactions between two DNA damage-inducible proteins.</title>
        <authorList>
            <person name="Bertolaet B.L."/>
            <person name="Clarke D.J."/>
            <person name="Wolff M."/>
            <person name="Watson M.H."/>
            <person name="Henze M."/>
            <person name="Divita G."/>
            <person name="Reed S.I."/>
        </authorList>
    </citation>
    <scope>SUBUNIT</scope>
    <scope>INTERACTION WITH RAD23</scope>
</reference>
<reference key="8">
    <citation type="journal article" date="2001" name="Mol. Cell. Biol.">
        <title>Dosage suppressors of pds1 implicate ubiquitin-associated domains in checkpoint control.</title>
        <authorList>
            <person name="Clarke D.J."/>
            <person name="Mondesert G."/>
            <person name="Segal M."/>
            <person name="Bertolaet B.L."/>
            <person name="Jensen S."/>
            <person name="Wolff M."/>
            <person name="Henze M."/>
            <person name="Reed S.I."/>
        </authorList>
    </citation>
    <scope>FUNCTION</scope>
</reference>
<reference key="9">
    <citation type="journal article" date="2001" name="Mol. Genet. Genomics">
        <title>Two alternative cell cycle checkpoint pathways differentially control DNA damage-dependent induction of MAG1 and DDI1 expression in yeast.</title>
        <authorList>
            <person name="Zhu Y."/>
            <person name="Xiao W."/>
        </authorList>
    </citation>
    <scope>INDUCTION</scope>
</reference>
<reference key="10">
    <citation type="journal article" date="2002" name="Biochem. Biophys. Res. Commun.">
        <title>Ubiquitin-like proteins and Rpn10 play cooperative roles in ubiquitin-dependent proteolysis.</title>
        <authorList>
            <person name="Saeki Y."/>
            <person name="Saitoh A."/>
            <person name="Toh-e A."/>
            <person name="Yokosawa H."/>
        </authorList>
    </citation>
    <scope>FUNCTION</scope>
</reference>
<reference key="11">
    <citation type="journal article" date="2003" name="Mol. Biol. Cell">
        <title>Phosphorylation of the autoinhibitory domain of the Sso t-SNAREs promotes binding of the Vsm1 SNARE regulator in yeast.</title>
        <authorList>
            <person name="Marash M."/>
            <person name="Gerst J.E."/>
        </authorList>
    </citation>
    <scope>FUNCTION</scope>
    <scope>INTERACTION WITH SNC1; SNC2; SSO; TLG1 AND TLG2</scope>
</reference>
<reference key="12">
    <citation type="journal article" date="2003" name="Nature">
        <title>Global analysis of protein expression in yeast.</title>
        <authorList>
            <person name="Ghaemmaghami S."/>
            <person name="Huh W.-K."/>
            <person name="Bower K."/>
            <person name="Howson R.W."/>
            <person name="Belle A."/>
            <person name="Dephoure N."/>
            <person name="O'Shea E.K."/>
            <person name="Weissman J.S."/>
        </authorList>
    </citation>
    <scope>LEVEL OF PROTEIN EXPRESSION [LARGE SCALE ANALYSIS]</scope>
</reference>
<reference key="13">
    <citation type="journal article" date="2003" name="Nat. Biotechnol.">
        <title>A proteomics approach to understanding protein ubiquitination.</title>
        <authorList>
            <person name="Peng J."/>
            <person name="Schwartz D."/>
            <person name="Elias J.E."/>
            <person name="Thoreen C.C."/>
            <person name="Cheng D."/>
            <person name="Marsischky G."/>
            <person name="Roelofs J."/>
            <person name="Finley D."/>
            <person name="Gygi S.P."/>
        </authorList>
    </citation>
    <scope>UBIQUITINATION [LARGE SCALE ANALYSIS] AT LYS-171</scope>
    <scope>IDENTIFICATION BY MASS SPECTROMETRY</scope>
    <source>
        <strain>SUB592</strain>
    </source>
</reference>
<reference key="14">
    <citation type="journal article" date="2003" name="Proc. Natl. Acad. Sci. U.S.A.">
        <title>A subset of membrane-associated proteins is ubiquitinated in response to mutations in the endoplasmic reticulum degradation machinery.</title>
        <authorList>
            <person name="Hitchcock A.L."/>
            <person name="Auld K."/>
            <person name="Gygi S.P."/>
            <person name="Silver P.A."/>
        </authorList>
    </citation>
    <scope>UBIQUITINATION [LARGE SCALE ANALYSIS] AT LYS-257</scope>
    <scope>IDENTIFICATION BY MASS SPECTROMETRY</scope>
</reference>
<reference key="15">
    <citation type="journal article" date="2004" name="Nucleic Acids Res.">
        <title>Pdr3 is required for DNA damage induction of MAG1 and DDI1 via a bi-directional promoter element.</title>
        <authorList>
            <person name="Zhu Y."/>
            <person name="Xiao W."/>
        </authorList>
    </citation>
    <scope>INDUCTION</scope>
</reference>
<reference key="16">
    <citation type="journal article" date="2005" name="Mol. Cell. Biol.">
        <title>The DNA damage-inducible UbL-UbA protein Ddi1 participates in Mec1-mediated degradation of Ho endonuclease.</title>
        <authorList>
            <person name="Kaplun L."/>
            <person name="Tzirkin R."/>
            <person name="Bakhrat A."/>
            <person name="Shabek N."/>
            <person name="Ivantsiv Y."/>
            <person name="Raveh D."/>
        </authorList>
    </citation>
    <scope>FUNCTION</scope>
    <scope>INTERACTION WITH THE HO ENDONUCLEASE</scope>
</reference>
<reference key="17">
    <citation type="journal article" date="2006" name="Cell Div.">
        <title>Yeast UBL-UBA proteins have partially redundant functions in cell cycle control.</title>
        <authorList>
            <person name="Diaz-Martinez L.A."/>
            <person name="Kang Y."/>
            <person name="Walters K.J."/>
            <person name="Clarke D.J."/>
        </authorList>
    </citation>
    <scope>FUNCTION</scope>
    <scope>SUBUNIT</scope>
</reference>
<reference key="18">
    <citation type="journal article" date="2006" name="Mol. Cell. Biol.">
        <title>Unique role for the UbL-UbA protein Ddi1 in turnover of SCFUfo1 complexes.</title>
        <authorList>
            <person name="Ivantsiv Y."/>
            <person name="Kaplun L."/>
            <person name="Tzirkin-Goldin R."/>
            <person name="Shabek N."/>
            <person name="Raveh D."/>
        </authorList>
    </citation>
    <scope>FUNCTION</scope>
    <scope>INTERACTION WITH UFO1</scope>
</reference>
<reference key="19">
    <citation type="journal article" date="2007" name="J. Proteome Res.">
        <title>Large-scale phosphorylation analysis of alpha-factor-arrested Saccharomyces cerevisiae.</title>
        <authorList>
            <person name="Li X."/>
            <person name="Gerber S.A."/>
            <person name="Rudner A.D."/>
            <person name="Beausoleil S.A."/>
            <person name="Haas W."/>
            <person name="Villen J."/>
            <person name="Elias J.E."/>
            <person name="Gygi S.P."/>
        </authorList>
    </citation>
    <scope>IDENTIFICATION BY MASS SPECTROMETRY [LARGE SCALE ANALYSIS]</scope>
    <source>
        <strain>ADR376</strain>
    </source>
</reference>
<reference key="20">
    <citation type="journal article" date="2008" name="Mol. Cell. Proteomics">
        <title>A multidimensional chromatography technology for in-depth phosphoproteome analysis.</title>
        <authorList>
            <person name="Albuquerque C.P."/>
            <person name="Smolka M.B."/>
            <person name="Payne S.H."/>
            <person name="Bafna V."/>
            <person name="Eng J."/>
            <person name="Zhou H."/>
        </authorList>
    </citation>
    <scope>IDENTIFICATION BY MASS SPECTROMETRY [LARGE SCALE ANALYSIS]</scope>
</reference>
<reference key="21">
    <citation type="journal article" date="2009" name="Science">
        <title>Global analysis of Cdk1 substrate phosphorylation sites provides insights into evolution.</title>
        <authorList>
            <person name="Holt L.J."/>
            <person name="Tuch B.B."/>
            <person name="Villen J."/>
            <person name="Johnson A.D."/>
            <person name="Gygi S.P."/>
            <person name="Morgan D.O."/>
        </authorList>
    </citation>
    <scope>IDENTIFICATION BY MASS SPECTROMETRY [LARGE SCALE ANALYSIS]</scope>
</reference>
<reference key="22">
    <citation type="journal article" date="2011" name="FASEB J.">
        <title>HIV proteinase inhibitors target the Ddi1-like protein of Leishmania parasites.</title>
        <authorList>
            <person name="White R.E."/>
            <person name="Powell D.J."/>
            <person name="Berry C."/>
        </authorList>
    </citation>
    <scope>FUNCTION</scope>
    <scope>ACTIVITY REGULATION</scope>
    <scope>MUTAGENESIS OF ASP-220</scope>
</reference>
<reference key="23">
    <citation type="journal article" date="2006" name="J. Mol. Biol.">
        <title>Ddi1, a eukaryotic protein with the retroviral protease fold.</title>
        <authorList>
            <person name="Sirkis R."/>
            <person name="Gerst J.E."/>
            <person name="Fass D."/>
        </authorList>
    </citation>
    <scope>X-RAY CRYSTALLOGRAPHY (2.3 ANGSTROMS) OF 180-325</scope>
    <scope>SUBUNIT</scope>
</reference>
<evidence type="ECO:0000250" key="1">
    <source>
        <dbReference type="UniProtKB" id="I7HUG0"/>
    </source>
</evidence>
<evidence type="ECO:0000255" key="2">
    <source>
        <dbReference type="PROSITE-ProRule" id="PRU00212"/>
    </source>
</evidence>
<evidence type="ECO:0000256" key="3">
    <source>
        <dbReference type="SAM" id="MobiDB-lite"/>
    </source>
</evidence>
<evidence type="ECO:0000269" key="4">
    <source>
    </source>
</evidence>
<evidence type="ECO:0000269" key="5">
    <source>
    </source>
</evidence>
<evidence type="ECO:0000269" key="6">
    <source>
    </source>
</evidence>
<evidence type="ECO:0000269" key="7">
    <source>
    </source>
</evidence>
<evidence type="ECO:0000269" key="8">
    <source>
    </source>
</evidence>
<evidence type="ECO:0000269" key="9">
    <source>
    </source>
</evidence>
<evidence type="ECO:0000269" key="10">
    <source>
    </source>
</evidence>
<evidence type="ECO:0000269" key="11">
    <source>
    </source>
</evidence>
<evidence type="ECO:0000269" key="12">
    <source>
    </source>
</evidence>
<evidence type="ECO:0000269" key="13">
    <source>
    </source>
</evidence>
<evidence type="ECO:0000269" key="14">
    <source>
    </source>
</evidence>
<evidence type="ECO:0000269" key="15">
    <source>
    </source>
</evidence>
<evidence type="ECO:0000269" key="16">
    <source>
    </source>
</evidence>
<evidence type="ECO:0000269" key="17">
    <source>
    </source>
</evidence>
<evidence type="ECO:0000269" key="18">
    <source>
    </source>
</evidence>
<evidence type="ECO:0000269" key="19">
    <source>
    </source>
</evidence>
<evidence type="ECO:0000269" key="20">
    <source>
    </source>
</evidence>
<evidence type="ECO:0000305" key="21"/>
<evidence type="ECO:0000305" key="22">
    <source>
    </source>
</evidence>
<evidence type="ECO:0007829" key="23">
    <source>
        <dbReference type="PDB" id="2MR9"/>
    </source>
</evidence>
<evidence type="ECO:0007829" key="24">
    <source>
        <dbReference type="PDB" id="2MRP"/>
    </source>
</evidence>
<evidence type="ECO:0007829" key="25">
    <source>
        <dbReference type="PDB" id="2N7E"/>
    </source>
</evidence>
<evidence type="ECO:0007829" key="26">
    <source>
        <dbReference type="PDB" id="4Z2Z"/>
    </source>
</evidence>
<evidence type="ECO:0007829" key="27">
    <source>
        <dbReference type="PDB" id="5KES"/>
    </source>
</evidence>
<dbReference type="EC" id="3.4.23.-" evidence="1"/>
<dbReference type="EMBL" id="U14002">
    <property type="protein sequence ID" value="AAB82066.1"/>
    <property type="molecule type" value="Genomic_DNA"/>
</dbReference>
<dbReference type="EMBL" id="AF034895">
    <property type="protein sequence ID" value="AAC18522.1"/>
    <property type="molecule type" value="Genomic_DNA"/>
</dbReference>
<dbReference type="EMBL" id="U18917">
    <property type="protein sequence ID" value="AAB64670.1"/>
    <property type="molecule type" value="Genomic_DNA"/>
</dbReference>
<dbReference type="EMBL" id="AY692945">
    <property type="protein sequence ID" value="AAT92964.1"/>
    <property type="molecule type" value="Genomic_DNA"/>
</dbReference>
<dbReference type="EMBL" id="BK006939">
    <property type="protein sequence ID" value="DAA07804.1"/>
    <property type="molecule type" value="Genomic_DNA"/>
</dbReference>
<dbReference type="PIR" id="S50646">
    <property type="entry name" value="S50646"/>
</dbReference>
<dbReference type="RefSeq" id="NP_011070.3">
    <property type="nucleotide sequence ID" value="NM_001179033.3"/>
</dbReference>
<dbReference type="PDB" id="2I1A">
    <property type="method" value="X-ray"/>
    <property type="resolution" value="2.30 A"/>
    <property type="chains" value="A/B/C/D=180-325"/>
</dbReference>
<dbReference type="PDB" id="2MR9">
    <property type="method" value="NMR"/>
    <property type="chains" value="A=389-428"/>
</dbReference>
<dbReference type="PDB" id="2MRO">
    <property type="method" value="NMR"/>
    <property type="chains" value="B=389-428"/>
</dbReference>
<dbReference type="PDB" id="2MRP">
    <property type="method" value="NMR"/>
    <property type="chains" value="A=2-80"/>
</dbReference>
<dbReference type="PDB" id="2MWS">
    <property type="method" value="NMR"/>
    <property type="chains" value="B=2-80"/>
</dbReference>
<dbReference type="PDB" id="2N7E">
    <property type="method" value="NMR"/>
    <property type="chains" value="A=1-80"/>
</dbReference>
<dbReference type="PDB" id="4Z2Z">
    <property type="method" value="X-ray"/>
    <property type="resolution" value="1.80 A"/>
    <property type="chains" value="A/B=185-325"/>
</dbReference>
<dbReference type="PDB" id="5KES">
    <property type="method" value="NMR"/>
    <property type="chains" value="A=86-196"/>
</dbReference>
<dbReference type="PDBsum" id="2I1A"/>
<dbReference type="PDBsum" id="2MR9"/>
<dbReference type="PDBsum" id="2MRO"/>
<dbReference type="PDBsum" id="2MRP"/>
<dbReference type="PDBsum" id="2MWS"/>
<dbReference type="PDBsum" id="2N7E"/>
<dbReference type="PDBsum" id="4Z2Z"/>
<dbReference type="PDBsum" id="5KES"/>
<dbReference type="BMRB" id="P40087"/>
<dbReference type="SMR" id="P40087"/>
<dbReference type="BioGRID" id="36892">
    <property type="interactions" value="122"/>
</dbReference>
<dbReference type="DIP" id="DIP-1216N"/>
<dbReference type="FunCoup" id="P40087">
    <property type="interactions" value="342"/>
</dbReference>
<dbReference type="IntAct" id="P40087">
    <property type="interactions" value="6"/>
</dbReference>
<dbReference type="MINT" id="P40087"/>
<dbReference type="STRING" id="4932.YER143W"/>
<dbReference type="MEROPS" id="A28.001"/>
<dbReference type="GlyGen" id="P40087">
    <property type="glycosylation" value="1 site"/>
</dbReference>
<dbReference type="iPTMnet" id="P40087"/>
<dbReference type="PaxDb" id="4932-YER143W"/>
<dbReference type="PeptideAtlas" id="P40087"/>
<dbReference type="EnsemblFungi" id="YER143W_mRNA">
    <property type="protein sequence ID" value="YER143W"/>
    <property type="gene ID" value="YER143W"/>
</dbReference>
<dbReference type="GeneID" id="856886"/>
<dbReference type="KEGG" id="sce:YER143W"/>
<dbReference type="AGR" id="SGD:S000000945"/>
<dbReference type="SGD" id="S000000945">
    <property type="gene designation" value="DDI1"/>
</dbReference>
<dbReference type="VEuPathDB" id="FungiDB:YER143W"/>
<dbReference type="eggNOG" id="KOG0012">
    <property type="taxonomic scope" value="Eukaryota"/>
</dbReference>
<dbReference type="GeneTree" id="ENSGT00950000182999"/>
<dbReference type="HOGENOM" id="CLU_020435_2_0_1"/>
<dbReference type="InParanoid" id="P40087"/>
<dbReference type="OMA" id="NTHTRHP"/>
<dbReference type="OrthoDB" id="1047367at2759"/>
<dbReference type="BioCyc" id="YEAST:G3O-30304-MONOMER"/>
<dbReference type="BioGRID-ORCS" id="856886">
    <property type="hits" value="5 hits in 10 CRISPR screens"/>
</dbReference>
<dbReference type="EvolutionaryTrace" id="P40087"/>
<dbReference type="PRO" id="PR:P40087"/>
<dbReference type="Proteomes" id="UP000002311">
    <property type="component" value="Chromosome V"/>
</dbReference>
<dbReference type="RNAct" id="P40087">
    <property type="molecule type" value="protein"/>
</dbReference>
<dbReference type="GO" id="GO:0005737">
    <property type="term" value="C:cytoplasm"/>
    <property type="evidence" value="ECO:0007669"/>
    <property type="project" value="UniProtKB-SubCell"/>
</dbReference>
<dbReference type="GO" id="GO:0005886">
    <property type="term" value="C:plasma membrane"/>
    <property type="evidence" value="ECO:0000314"/>
    <property type="project" value="SGD"/>
</dbReference>
<dbReference type="GO" id="GO:0004190">
    <property type="term" value="F:aspartic-type endopeptidase activity"/>
    <property type="evidence" value="ECO:0000314"/>
    <property type="project" value="SGD"/>
</dbReference>
<dbReference type="GO" id="GO:0031593">
    <property type="term" value="F:polyubiquitin modification-dependent protein binding"/>
    <property type="evidence" value="ECO:0000314"/>
    <property type="project" value="SGD"/>
</dbReference>
<dbReference type="GO" id="GO:1904855">
    <property type="term" value="F:proteasome regulatory particle binding"/>
    <property type="evidence" value="ECO:0000314"/>
    <property type="project" value="SGD"/>
</dbReference>
<dbReference type="GO" id="GO:0030674">
    <property type="term" value="F:protein-macromolecule adaptor activity"/>
    <property type="evidence" value="ECO:0000314"/>
    <property type="project" value="SGD"/>
</dbReference>
<dbReference type="GO" id="GO:0000149">
    <property type="term" value="F:SNARE binding"/>
    <property type="evidence" value="ECO:0000314"/>
    <property type="project" value="SGD"/>
</dbReference>
<dbReference type="GO" id="GO:0043130">
    <property type="term" value="F:ubiquitin binding"/>
    <property type="evidence" value="ECO:0000314"/>
    <property type="project" value="SGD"/>
</dbReference>
<dbReference type="GO" id="GO:0045740">
    <property type="term" value="P:positive regulation of DNA replication"/>
    <property type="evidence" value="ECO:0000315"/>
    <property type="project" value="SGD"/>
</dbReference>
<dbReference type="GO" id="GO:0009306">
    <property type="term" value="P:protein secretion"/>
    <property type="evidence" value="ECO:0000315"/>
    <property type="project" value="SGD"/>
</dbReference>
<dbReference type="GO" id="GO:0043328">
    <property type="term" value="P:protein transport to vacuole involved in ubiquitin-dependent protein catabolic process via the multivesicular body sorting pathway"/>
    <property type="evidence" value="ECO:0000315"/>
    <property type="project" value="SGD"/>
</dbReference>
<dbReference type="GO" id="GO:0006511">
    <property type="term" value="P:ubiquitin-dependent protein catabolic process"/>
    <property type="evidence" value="ECO:0000315"/>
    <property type="project" value="SGD"/>
</dbReference>
<dbReference type="GO" id="GO:0016192">
    <property type="term" value="P:vesicle-mediated transport"/>
    <property type="evidence" value="ECO:0000315"/>
    <property type="project" value="SGD"/>
</dbReference>
<dbReference type="CDD" id="cd05479">
    <property type="entry name" value="RP_DDI"/>
    <property type="match status" value="1"/>
</dbReference>
<dbReference type="CDD" id="cd14309">
    <property type="entry name" value="UBA_scDdi1_like"/>
    <property type="match status" value="1"/>
</dbReference>
<dbReference type="CDD" id="cd01796">
    <property type="entry name" value="Ubl_Ddi1_like"/>
    <property type="match status" value="1"/>
</dbReference>
<dbReference type="FunFam" id="2.40.70.10:FF:000072">
    <property type="entry name" value="DNA damage-inducible protein"/>
    <property type="match status" value="1"/>
</dbReference>
<dbReference type="FunFam" id="3.10.20.90:FF:000348">
    <property type="entry name" value="DNA damage-inducible protein"/>
    <property type="match status" value="1"/>
</dbReference>
<dbReference type="Gene3D" id="2.40.70.10">
    <property type="entry name" value="Acid Proteases"/>
    <property type="match status" value="1"/>
</dbReference>
<dbReference type="Gene3D" id="1.10.8.10">
    <property type="entry name" value="DNA helicase RuvA subunit, C-terminal domain"/>
    <property type="match status" value="1"/>
</dbReference>
<dbReference type="Gene3D" id="3.10.20.90">
    <property type="entry name" value="Phosphatidylinositol 3-kinase Catalytic Subunit, Chain A, domain 1"/>
    <property type="match status" value="1"/>
</dbReference>
<dbReference type="InterPro" id="IPR033882">
    <property type="entry name" value="DDI1_N"/>
</dbReference>
<dbReference type="InterPro" id="IPR001995">
    <property type="entry name" value="Peptidase_A2_cat"/>
</dbReference>
<dbReference type="InterPro" id="IPR019103">
    <property type="entry name" value="Peptidase_aspartic_DDI1-type"/>
</dbReference>
<dbReference type="InterPro" id="IPR021109">
    <property type="entry name" value="Peptidase_aspartic_dom_sf"/>
</dbReference>
<dbReference type="InterPro" id="IPR015940">
    <property type="entry name" value="UBA"/>
</dbReference>
<dbReference type="InterPro" id="IPR009060">
    <property type="entry name" value="UBA-like_sf"/>
</dbReference>
<dbReference type="PANTHER" id="PTHR12917">
    <property type="entry name" value="ASPARTYL PROTEASE DDI-RELATED"/>
    <property type="match status" value="1"/>
</dbReference>
<dbReference type="PANTHER" id="PTHR12917:SF1">
    <property type="entry name" value="AT13091P"/>
    <property type="match status" value="1"/>
</dbReference>
<dbReference type="Pfam" id="PF09668">
    <property type="entry name" value="Asp_protease"/>
    <property type="match status" value="1"/>
</dbReference>
<dbReference type="Pfam" id="PF00627">
    <property type="entry name" value="UBA"/>
    <property type="match status" value="1"/>
</dbReference>
<dbReference type="SMART" id="SM00165">
    <property type="entry name" value="UBA"/>
    <property type="match status" value="1"/>
</dbReference>
<dbReference type="SUPFAM" id="SSF50630">
    <property type="entry name" value="Acid proteases"/>
    <property type="match status" value="1"/>
</dbReference>
<dbReference type="SUPFAM" id="SSF46934">
    <property type="entry name" value="UBA-like"/>
    <property type="match status" value="1"/>
</dbReference>
<dbReference type="PROSITE" id="PS50030">
    <property type="entry name" value="UBA"/>
    <property type="match status" value="1"/>
</dbReference>
<gene>
    <name type="primary">DDI1</name>
    <name type="synonym">VSM1</name>
    <name type="ordered locus">YER143W</name>
</gene>
<keyword id="KW-0002">3D-structure</keyword>
<keyword id="KW-0064">Aspartyl protease</keyword>
<keyword id="KW-1003">Cell membrane</keyword>
<keyword id="KW-0963">Cytoplasm</keyword>
<keyword id="KW-0378">Hydrolase</keyword>
<keyword id="KW-1017">Isopeptide bond</keyword>
<keyword id="KW-0472">Membrane</keyword>
<keyword id="KW-0645">Protease</keyword>
<keyword id="KW-0653">Protein transport</keyword>
<keyword id="KW-1185">Reference proteome</keyword>
<keyword id="KW-0813">Transport</keyword>
<keyword id="KW-0832">Ubl conjugation</keyword>